<accession>Q1AUL2</accession>
<dbReference type="EMBL" id="CP000386">
    <property type="protein sequence ID" value="ABG04916.1"/>
    <property type="molecule type" value="Genomic_DNA"/>
</dbReference>
<dbReference type="RefSeq" id="WP_011564931.1">
    <property type="nucleotide sequence ID" value="NC_008148.1"/>
</dbReference>
<dbReference type="SMR" id="Q1AUL2"/>
<dbReference type="STRING" id="266117.Rxyl_1969"/>
<dbReference type="KEGG" id="rxy:Rxyl_1969"/>
<dbReference type="eggNOG" id="COG1826">
    <property type="taxonomic scope" value="Bacteria"/>
</dbReference>
<dbReference type="HOGENOM" id="CLU_086034_3_3_11"/>
<dbReference type="Proteomes" id="UP000006637">
    <property type="component" value="Chromosome"/>
</dbReference>
<dbReference type="GO" id="GO:0033281">
    <property type="term" value="C:TAT protein transport complex"/>
    <property type="evidence" value="ECO:0007669"/>
    <property type="project" value="UniProtKB-UniRule"/>
</dbReference>
<dbReference type="GO" id="GO:0008320">
    <property type="term" value="F:protein transmembrane transporter activity"/>
    <property type="evidence" value="ECO:0007669"/>
    <property type="project" value="UniProtKB-UniRule"/>
</dbReference>
<dbReference type="GO" id="GO:0043953">
    <property type="term" value="P:protein transport by the Tat complex"/>
    <property type="evidence" value="ECO:0007669"/>
    <property type="project" value="UniProtKB-UniRule"/>
</dbReference>
<dbReference type="Gene3D" id="1.20.5.3310">
    <property type="match status" value="1"/>
</dbReference>
<dbReference type="HAMAP" id="MF_00236">
    <property type="entry name" value="TatA_E"/>
    <property type="match status" value="1"/>
</dbReference>
<dbReference type="InterPro" id="IPR003369">
    <property type="entry name" value="TatA/B/E"/>
</dbReference>
<dbReference type="InterPro" id="IPR006312">
    <property type="entry name" value="TatA/E"/>
</dbReference>
<dbReference type="NCBIfam" id="TIGR01411">
    <property type="entry name" value="tatAE"/>
    <property type="match status" value="1"/>
</dbReference>
<dbReference type="PANTHER" id="PTHR42982">
    <property type="entry name" value="SEC-INDEPENDENT PROTEIN TRANSLOCASE PROTEIN TATA"/>
    <property type="match status" value="1"/>
</dbReference>
<dbReference type="PANTHER" id="PTHR42982:SF1">
    <property type="entry name" value="SEC-INDEPENDENT PROTEIN TRANSLOCASE PROTEIN TATA"/>
    <property type="match status" value="1"/>
</dbReference>
<dbReference type="Pfam" id="PF02416">
    <property type="entry name" value="TatA_B_E"/>
    <property type="match status" value="1"/>
</dbReference>
<protein>
    <recommendedName>
        <fullName evidence="1">Sec-independent protein translocase protein TatA</fullName>
    </recommendedName>
</protein>
<sequence length="92" mass="9872">MIPANFGGTELIILLVIILLLFGAKRIPELARGLGTGVREFRKGTSGAYEELEEKKGEEEKDEGGKKEAEASGRGEEEQQARAAGEAGRKQG</sequence>
<keyword id="KW-1003">Cell membrane</keyword>
<keyword id="KW-0472">Membrane</keyword>
<keyword id="KW-0653">Protein transport</keyword>
<keyword id="KW-1185">Reference proteome</keyword>
<keyword id="KW-0811">Translocation</keyword>
<keyword id="KW-0812">Transmembrane</keyword>
<keyword id="KW-1133">Transmembrane helix</keyword>
<keyword id="KW-0813">Transport</keyword>
<evidence type="ECO:0000255" key="1">
    <source>
        <dbReference type="HAMAP-Rule" id="MF_00236"/>
    </source>
</evidence>
<evidence type="ECO:0000256" key="2">
    <source>
        <dbReference type="SAM" id="MobiDB-lite"/>
    </source>
</evidence>
<proteinExistence type="inferred from homology"/>
<organism>
    <name type="scientific">Rubrobacter xylanophilus (strain DSM 9941 / JCM 11954 / NBRC 16129 / PRD-1)</name>
    <dbReference type="NCBI Taxonomy" id="266117"/>
    <lineage>
        <taxon>Bacteria</taxon>
        <taxon>Bacillati</taxon>
        <taxon>Actinomycetota</taxon>
        <taxon>Rubrobacteria</taxon>
        <taxon>Rubrobacterales</taxon>
        <taxon>Rubrobacteraceae</taxon>
        <taxon>Rubrobacter</taxon>
    </lineage>
</organism>
<reference key="1">
    <citation type="submission" date="2006-06" db="EMBL/GenBank/DDBJ databases">
        <title>Complete sequence of Rubrobacter xylanophilus DSM 9941.</title>
        <authorList>
            <consortium name="US DOE Joint Genome Institute"/>
            <person name="Copeland A."/>
            <person name="Lucas S."/>
            <person name="Lapidus A."/>
            <person name="Barry K."/>
            <person name="Detter J.C."/>
            <person name="Glavina del Rio T."/>
            <person name="Hammon N."/>
            <person name="Israni S."/>
            <person name="Dalin E."/>
            <person name="Tice H."/>
            <person name="Pitluck S."/>
            <person name="Munk A.C."/>
            <person name="Brettin T."/>
            <person name="Bruce D."/>
            <person name="Han C."/>
            <person name="Tapia R."/>
            <person name="Gilna P."/>
            <person name="Schmutz J."/>
            <person name="Larimer F."/>
            <person name="Land M."/>
            <person name="Hauser L."/>
            <person name="Kyrpides N."/>
            <person name="Lykidis A."/>
            <person name="da Costa M.S."/>
            <person name="Rainey F.A."/>
            <person name="Empadinhas N."/>
            <person name="Jolivet E."/>
            <person name="Battista J.R."/>
            <person name="Richardson P."/>
        </authorList>
    </citation>
    <scope>NUCLEOTIDE SEQUENCE [LARGE SCALE GENOMIC DNA]</scope>
    <source>
        <strain>DSM 9941 / JCM 11954 / NBRC 16129 / PRD-1</strain>
    </source>
</reference>
<name>TATA_RUBXD</name>
<gene>
    <name evidence="1" type="primary">tatA</name>
    <name type="ordered locus">Rxyl_1969</name>
</gene>
<comment type="function">
    <text evidence="1">Part of the twin-arginine translocation (Tat) system that transports large folded proteins containing a characteristic twin-arginine motif in their signal peptide across membranes. TatA could form the protein-conducting channel of the Tat system.</text>
</comment>
<comment type="subunit">
    <text evidence="1">The Tat system comprises two distinct complexes: a TatABC complex, containing multiple copies of TatA, TatB and TatC subunits, and a separate TatA complex, containing only TatA subunits. Substrates initially bind to the TatABC complex, which probably triggers association of the separate TatA complex to form the active translocon.</text>
</comment>
<comment type="subcellular location">
    <subcellularLocation>
        <location evidence="1">Cell membrane</location>
        <topology evidence="1">Single-pass membrane protein</topology>
    </subcellularLocation>
</comment>
<comment type="similarity">
    <text evidence="1">Belongs to the TatA/E family.</text>
</comment>
<feature type="chain" id="PRO_1000078316" description="Sec-independent protein translocase protein TatA">
    <location>
        <begin position="1"/>
        <end position="92"/>
    </location>
</feature>
<feature type="transmembrane region" description="Helical" evidence="1">
    <location>
        <begin position="2"/>
        <end position="22"/>
    </location>
</feature>
<feature type="region of interest" description="Disordered" evidence="2">
    <location>
        <begin position="43"/>
        <end position="92"/>
    </location>
</feature>
<feature type="compositionally biased region" description="Basic and acidic residues" evidence="2">
    <location>
        <begin position="53"/>
        <end position="80"/>
    </location>
</feature>